<proteinExistence type="evidence at protein level"/>
<reference key="1">
    <citation type="journal article" date="1992" name="J. Bacteriol.">
        <title>Molecular characterization of the Zymomonas mobilis enolase (eno) gene.</title>
        <authorList>
            <person name="Burnett M.E."/>
            <person name="Liu J."/>
            <person name="Conway T."/>
        </authorList>
    </citation>
    <scope>NUCLEOTIDE SEQUENCE [GENOMIC DNA]</scope>
</reference>
<reference key="2">
    <citation type="submission" date="1998-04" db="EMBL/GenBank/DDBJ databases">
        <authorList>
            <person name="Lee J."/>
            <person name="Jin S."/>
            <person name="Kang H.S."/>
        </authorList>
    </citation>
    <scope>NUCLEOTIDE SEQUENCE [GENOMIC DNA]</scope>
    <source>
        <strain>ATCC 31821 / ZM4 / CP4</strain>
    </source>
</reference>
<reference key="3">
    <citation type="journal article" date="2005" name="Nat. Biotechnol.">
        <title>The genome sequence of the ethanologenic bacterium Zymomonas mobilis ZM4.</title>
        <authorList>
            <person name="Seo J.-S."/>
            <person name="Chong H."/>
            <person name="Park H.S."/>
            <person name="Yoon K.-O."/>
            <person name="Jung C."/>
            <person name="Kim J.J."/>
            <person name="Hong J.H."/>
            <person name="Kim H."/>
            <person name="Kim J.-H."/>
            <person name="Kil J.-I."/>
            <person name="Park C.J."/>
            <person name="Oh H.-M."/>
            <person name="Lee J.-S."/>
            <person name="Jin S.-J."/>
            <person name="Um H.-W."/>
            <person name="Lee H.-J."/>
            <person name="Oh S.-J."/>
            <person name="Kim J.Y."/>
            <person name="Kang H.L."/>
            <person name="Lee S.Y."/>
            <person name="Lee K.J."/>
            <person name="Kang H.S."/>
        </authorList>
    </citation>
    <scope>NUCLEOTIDE SEQUENCE [LARGE SCALE GENOMIC DNA]</scope>
    <source>
        <strain>ATCC 31821 / ZM4 / CP4</strain>
    </source>
</reference>
<reference key="4">
    <citation type="journal article" date="1986" name="Biochem. J.">
        <title>Isolation and properties of the glycolytic enzymes from Zymomonas mobilis. The five enzymes from glyceraldehyde-3-phosphate dehydrogenase through to pyruvate kinase.</title>
        <authorList>
            <person name="Pawluk A."/>
            <person name="Scopes R.K."/>
            <person name="Griffiths-Smith K."/>
        </authorList>
    </citation>
    <scope>FUNCTION</scope>
    <scope>CATALYTIC ACTIVITY</scope>
    <scope>BIOPHYSICOCHEMICAL PROPERTIES</scope>
    <scope>SUBUNIT</scope>
    <source>
        <strain>ATCC 29191 / DSM 3580 / JCM 10190 / CECT 560 / NBRC 13756 / NCIMB 11199 / NRRL B-4490 / ZM6</strain>
    </source>
</reference>
<comment type="function">
    <text evidence="1 2">Catalyzes the reversible conversion of 2-phosphoglycerate (2-PG) into phosphoenolpyruvate (PEP) (PubMed:3026343). It is essential for the degradation of carbohydrates via glycolysis.</text>
</comment>
<comment type="catalytic activity">
    <reaction evidence="1 2">
        <text>(2R)-2-phosphoglycerate = phosphoenolpyruvate + H2O</text>
        <dbReference type="Rhea" id="RHEA:10164"/>
        <dbReference type="ChEBI" id="CHEBI:15377"/>
        <dbReference type="ChEBI" id="CHEBI:58289"/>
        <dbReference type="ChEBI" id="CHEBI:58702"/>
        <dbReference type="EC" id="4.2.1.11"/>
    </reaction>
    <physiologicalReaction direction="left-to-right" evidence="2">
        <dbReference type="Rhea" id="RHEA:10165"/>
    </physiologicalReaction>
</comment>
<comment type="cofactor">
    <cofactor evidence="1">
        <name>Mg(2+)</name>
        <dbReference type="ChEBI" id="CHEBI:18420"/>
    </cofactor>
    <text evidence="1">Binds a second Mg(2+) ion via substrate during catalysis.</text>
</comment>
<comment type="biophysicochemical properties">
    <kinetics>
        <KM evidence="2">0.08 mM for 2-phospho-D-glycerate</KM>
    </kinetics>
</comment>
<comment type="pathway">
    <text evidence="1">Carbohydrate degradation; glycolysis; pyruvate from D-glyceraldehyde 3-phosphate: step 4/5.</text>
</comment>
<comment type="subunit">
    <text evidence="2">Homooctamer.</text>
</comment>
<comment type="subcellular location">
    <subcellularLocation>
        <location evidence="1">Cytoplasm</location>
    </subcellularLocation>
    <subcellularLocation>
        <location evidence="1">Secreted</location>
    </subcellularLocation>
    <subcellularLocation>
        <location evidence="1">Cell surface</location>
    </subcellularLocation>
    <text evidence="1">Fractions of enolase are present in both the cytoplasm and on the cell surface.</text>
</comment>
<comment type="similarity">
    <text evidence="1">Belongs to the enolase family.</text>
</comment>
<protein>
    <recommendedName>
        <fullName evidence="1">Enolase</fullName>
        <ecNumber evidence="1 2">4.2.1.11</ecNumber>
    </recommendedName>
    <alternativeName>
        <fullName evidence="1">2-phospho-D-glycerate hydro-lyase</fullName>
    </alternativeName>
    <alternativeName>
        <fullName evidence="1">2-phosphoglycerate dehydratase</fullName>
    </alternativeName>
</protein>
<feature type="chain" id="PRO_0000134018" description="Enolase">
    <location>
        <begin position="1"/>
        <end position="429"/>
    </location>
</feature>
<feature type="active site" description="Proton donor" evidence="1">
    <location>
        <position position="205"/>
    </location>
</feature>
<feature type="active site" description="Proton acceptor" evidence="1">
    <location>
        <position position="339"/>
    </location>
</feature>
<feature type="binding site" evidence="1">
    <location>
        <position position="163"/>
    </location>
    <ligand>
        <name>(2R)-2-phosphoglycerate</name>
        <dbReference type="ChEBI" id="CHEBI:58289"/>
    </ligand>
</feature>
<feature type="binding site" evidence="1">
    <location>
        <position position="242"/>
    </location>
    <ligand>
        <name>Mg(2+)</name>
        <dbReference type="ChEBI" id="CHEBI:18420"/>
    </ligand>
</feature>
<feature type="binding site" evidence="1">
    <location>
        <position position="287"/>
    </location>
    <ligand>
        <name>Mg(2+)</name>
        <dbReference type="ChEBI" id="CHEBI:18420"/>
    </ligand>
</feature>
<feature type="binding site" evidence="1">
    <location>
        <position position="314"/>
    </location>
    <ligand>
        <name>Mg(2+)</name>
        <dbReference type="ChEBI" id="CHEBI:18420"/>
    </ligand>
</feature>
<feature type="binding site" evidence="1">
    <location>
        <position position="339"/>
    </location>
    <ligand>
        <name>(2R)-2-phosphoglycerate</name>
        <dbReference type="ChEBI" id="CHEBI:58289"/>
    </ligand>
</feature>
<feature type="binding site" evidence="1">
    <location>
        <position position="368"/>
    </location>
    <ligand>
        <name>(2R)-2-phosphoglycerate</name>
        <dbReference type="ChEBI" id="CHEBI:58289"/>
    </ligand>
</feature>
<feature type="binding site" evidence="1">
    <location>
        <position position="369"/>
    </location>
    <ligand>
        <name>(2R)-2-phosphoglycerate</name>
        <dbReference type="ChEBI" id="CHEBI:58289"/>
    </ligand>
</feature>
<feature type="binding site" evidence="1">
    <location>
        <position position="390"/>
    </location>
    <ligand>
        <name>(2R)-2-phosphoglycerate</name>
        <dbReference type="ChEBI" id="CHEBI:58289"/>
    </ligand>
</feature>
<feature type="sequence conflict" description="In Ref. 2; AAC70360." evidence="3" ref="2">
    <original>F</original>
    <variation>S</variation>
    <location>
        <position position="186"/>
    </location>
</feature>
<feature type="sequence conflict" description="In Ref. 1; AAA27686 and 2; AAC70360." evidence="3" ref="1 2">
    <location>
        <position position="288"/>
    </location>
</feature>
<feature type="sequence conflict" description="In Ref. 1; AAA27686 and 2; AAC70360." evidence="3" ref="1 2">
    <original>G</original>
    <variation>F</variation>
    <location>
        <position position="297"/>
    </location>
</feature>
<feature type="sequence conflict" description="In Ref. 1; AAA27686 and 2; AAC70360." evidence="3" ref="1 2">
    <original>A</original>
    <variation>P</variation>
    <location>
        <position position="363"/>
    </location>
</feature>
<feature type="sequence conflict" description="In Ref. 1; AAA27686." evidence="3" ref="1">
    <original>G</original>
    <variation>V</variation>
    <location>
        <position position="370"/>
    </location>
</feature>
<feature type="sequence conflict" description="In Ref. 2; AAC70360." evidence="3" ref="2">
    <original>ETEDTTIADLAVATNCGQIKTGSLCRSERIAKYNQLMRIEEELGSVAKYAGRSVLRKAK</original>
    <variation>GNRRHHDC</variation>
    <location>
        <begin position="371"/>
        <end position="429"/>
    </location>
</feature>
<dbReference type="EC" id="4.2.1.11" evidence="1 2"/>
<dbReference type="EMBL" id="M99380">
    <property type="protein sequence ID" value="AAA27686.1"/>
    <property type="molecule type" value="Genomic_DNA"/>
</dbReference>
<dbReference type="EMBL" id="AF086791">
    <property type="protein sequence ID" value="AAC70360.1"/>
    <property type="molecule type" value="Genomic_DNA"/>
</dbReference>
<dbReference type="EMBL" id="AE008692">
    <property type="protein sequence ID" value="AAV90232.1"/>
    <property type="molecule type" value="Genomic_DNA"/>
</dbReference>
<dbReference type="PIR" id="A45732">
    <property type="entry name" value="A45732"/>
</dbReference>
<dbReference type="PIR" id="T33721">
    <property type="entry name" value="T33721"/>
</dbReference>
<dbReference type="RefSeq" id="WP_011241362.1">
    <property type="nucleotide sequence ID" value="NZ_CP035711.1"/>
</dbReference>
<dbReference type="SMR" id="P33675"/>
<dbReference type="STRING" id="264203.ZMO1608"/>
<dbReference type="GeneID" id="79905057"/>
<dbReference type="KEGG" id="zmo:ZMO1608"/>
<dbReference type="eggNOG" id="COG0148">
    <property type="taxonomic scope" value="Bacteria"/>
</dbReference>
<dbReference type="HOGENOM" id="CLU_031223_2_1_5"/>
<dbReference type="SABIO-RK" id="P33675"/>
<dbReference type="UniPathway" id="UPA00109">
    <property type="reaction ID" value="UER00187"/>
</dbReference>
<dbReference type="Proteomes" id="UP000001173">
    <property type="component" value="Chromosome"/>
</dbReference>
<dbReference type="GO" id="GO:0009986">
    <property type="term" value="C:cell surface"/>
    <property type="evidence" value="ECO:0007669"/>
    <property type="project" value="UniProtKB-SubCell"/>
</dbReference>
<dbReference type="GO" id="GO:0005576">
    <property type="term" value="C:extracellular region"/>
    <property type="evidence" value="ECO:0007669"/>
    <property type="project" value="UniProtKB-SubCell"/>
</dbReference>
<dbReference type="GO" id="GO:0000015">
    <property type="term" value="C:phosphopyruvate hydratase complex"/>
    <property type="evidence" value="ECO:0007669"/>
    <property type="project" value="InterPro"/>
</dbReference>
<dbReference type="GO" id="GO:0000287">
    <property type="term" value="F:magnesium ion binding"/>
    <property type="evidence" value="ECO:0007669"/>
    <property type="project" value="UniProtKB-UniRule"/>
</dbReference>
<dbReference type="GO" id="GO:0004634">
    <property type="term" value="F:phosphopyruvate hydratase activity"/>
    <property type="evidence" value="ECO:0007669"/>
    <property type="project" value="UniProtKB-UniRule"/>
</dbReference>
<dbReference type="GO" id="GO:0006096">
    <property type="term" value="P:glycolytic process"/>
    <property type="evidence" value="ECO:0007669"/>
    <property type="project" value="UniProtKB-UniRule"/>
</dbReference>
<dbReference type="CDD" id="cd03313">
    <property type="entry name" value="enolase"/>
    <property type="match status" value="1"/>
</dbReference>
<dbReference type="FunFam" id="3.20.20.120:FF:000001">
    <property type="entry name" value="Enolase"/>
    <property type="match status" value="1"/>
</dbReference>
<dbReference type="FunFam" id="3.30.390.10:FF:000001">
    <property type="entry name" value="Enolase"/>
    <property type="match status" value="1"/>
</dbReference>
<dbReference type="Gene3D" id="3.20.20.120">
    <property type="entry name" value="Enolase-like C-terminal domain"/>
    <property type="match status" value="1"/>
</dbReference>
<dbReference type="Gene3D" id="3.30.390.10">
    <property type="entry name" value="Enolase-like, N-terminal domain"/>
    <property type="match status" value="1"/>
</dbReference>
<dbReference type="HAMAP" id="MF_00318">
    <property type="entry name" value="Enolase"/>
    <property type="match status" value="1"/>
</dbReference>
<dbReference type="InterPro" id="IPR000941">
    <property type="entry name" value="Enolase"/>
</dbReference>
<dbReference type="InterPro" id="IPR036849">
    <property type="entry name" value="Enolase-like_C_sf"/>
</dbReference>
<dbReference type="InterPro" id="IPR029017">
    <property type="entry name" value="Enolase-like_N"/>
</dbReference>
<dbReference type="InterPro" id="IPR020810">
    <property type="entry name" value="Enolase_C"/>
</dbReference>
<dbReference type="InterPro" id="IPR020809">
    <property type="entry name" value="Enolase_CS"/>
</dbReference>
<dbReference type="InterPro" id="IPR020811">
    <property type="entry name" value="Enolase_N"/>
</dbReference>
<dbReference type="NCBIfam" id="TIGR01060">
    <property type="entry name" value="eno"/>
    <property type="match status" value="1"/>
</dbReference>
<dbReference type="PANTHER" id="PTHR11902">
    <property type="entry name" value="ENOLASE"/>
    <property type="match status" value="1"/>
</dbReference>
<dbReference type="PANTHER" id="PTHR11902:SF1">
    <property type="entry name" value="ENOLASE"/>
    <property type="match status" value="1"/>
</dbReference>
<dbReference type="Pfam" id="PF00113">
    <property type="entry name" value="Enolase_C"/>
    <property type="match status" value="1"/>
</dbReference>
<dbReference type="Pfam" id="PF03952">
    <property type="entry name" value="Enolase_N"/>
    <property type="match status" value="1"/>
</dbReference>
<dbReference type="PIRSF" id="PIRSF001400">
    <property type="entry name" value="Enolase"/>
    <property type="match status" value="1"/>
</dbReference>
<dbReference type="PRINTS" id="PR00148">
    <property type="entry name" value="ENOLASE"/>
</dbReference>
<dbReference type="SFLD" id="SFLDS00001">
    <property type="entry name" value="Enolase"/>
    <property type="match status" value="1"/>
</dbReference>
<dbReference type="SFLD" id="SFLDF00002">
    <property type="entry name" value="enolase"/>
    <property type="match status" value="1"/>
</dbReference>
<dbReference type="SMART" id="SM01192">
    <property type="entry name" value="Enolase_C"/>
    <property type="match status" value="1"/>
</dbReference>
<dbReference type="SMART" id="SM01193">
    <property type="entry name" value="Enolase_N"/>
    <property type="match status" value="1"/>
</dbReference>
<dbReference type="SUPFAM" id="SSF51604">
    <property type="entry name" value="Enolase C-terminal domain-like"/>
    <property type="match status" value="1"/>
</dbReference>
<dbReference type="SUPFAM" id="SSF54826">
    <property type="entry name" value="Enolase N-terminal domain-like"/>
    <property type="match status" value="1"/>
</dbReference>
<dbReference type="PROSITE" id="PS00164">
    <property type="entry name" value="ENOLASE"/>
    <property type="match status" value="1"/>
</dbReference>
<name>ENO_ZYMMO</name>
<keyword id="KW-0963">Cytoplasm</keyword>
<keyword id="KW-0324">Glycolysis</keyword>
<keyword id="KW-0456">Lyase</keyword>
<keyword id="KW-0460">Magnesium</keyword>
<keyword id="KW-0479">Metal-binding</keyword>
<keyword id="KW-1185">Reference proteome</keyword>
<keyword id="KW-0964">Secreted</keyword>
<gene>
    <name evidence="1" type="primary">eno</name>
    <name type="ordered locus">ZMO1608</name>
</gene>
<sequence length="429" mass="45743">MTAIVSIHGRQVVDSRGNPTVEVDVTLEDGSFGRAAVPSGASTGVHEAVELRDGDKTRWGGKGVTKAVHAVNNEIANAIIGLEAEDQELIDQTMIKLDGTPNKGKFGANAILGVSLAVAKAAAEARGLPLYRYVGGTAAHVLPVPMMNIVNGGMHADNPIDFQEFMIAPVGASSINEAVRIGTEVFHTLKKELSAKGMNTNVGDEGGFAPSLDSASSALDFIVDSISKAGYKPGEDVFIALDAASSEFYNKDQNIYDLKGEGRKLTSAQLVDYYVELCGKYPIYSIEDGLAEDDFEGWKILTEKLGDKVQLVGDDLFVTNVKRLSDGIERGIANSLLVKFNQIGSLSETLAAVNMANDASYTAVMSHRSGETEDTTIADLAVATNCGQIKTGSLCRSERIAKYNQLMRIEEELGSVAKYAGRSVLRKAK</sequence>
<evidence type="ECO:0000255" key="1">
    <source>
        <dbReference type="HAMAP-Rule" id="MF_00318"/>
    </source>
</evidence>
<evidence type="ECO:0000269" key="2">
    <source>
    </source>
</evidence>
<evidence type="ECO:0000305" key="3"/>
<accession>P33675</accession>
<accession>O69010</accession>
<accession>Q5NM28</accession>
<organism>
    <name type="scientific">Zymomonas mobilis subsp. mobilis (strain ATCC 31821 / ZM4 / CP4)</name>
    <dbReference type="NCBI Taxonomy" id="264203"/>
    <lineage>
        <taxon>Bacteria</taxon>
        <taxon>Pseudomonadati</taxon>
        <taxon>Pseudomonadota</taxon>
        <taxon>Alphaproteobacteria</taxon>
        <taxon>Sphingomonadales</taxon>
        <taxon>Zymomonadaceae</taxon>
        <taxon>Zymomonas</taxon>
    </lineage>
</organism>